<feature type="signal peptide" evidence="1">
    <location>
        <begin position="1"/>
        <end position="21"/>
    </location>
</feature>
<feature type="propeptide" id="PRO_1000128929" evidence="1">
    <location>
        <begin position="22"/>
        <end position="58"/>
    </location>
</feature>
<feature type="chain" id="PRO_1000128930" description="Acid shock protein">
    <location>
        <begin position="59"/>
        <end position="102"/>
    </location>
</feature>
<feature type="region of interest" description="Disordered" evidence="2">
    <location>
        <begin position="22"/>
        <end position="102"/>
    </location>
</feature>
<feature type="compositionally biased region" description="Low complexity" evidence="2">
    <location>
        <begin position="22"/>
        <end position="41"/>
    </location>
</feature>
<feature type="compositionally biased region" description="Basic residues" evidence="2">
    <location>
        <begin position="80"/>
        <end position="90"/>
    </location>
</feature>
<feature type="compositionally biased region" description="Low complexity" evidence="2">
    <location>
        <begin position="91"/>
        <end position="102"/>
    </location>
</feature>
<sequence>MKKVLALVVAAAMGLSSAAFAAETATTPAPTATTTKAAPAKTTHHKKQHKAAPAQKAQAAKKHHKNAKTEQKAPEQKAQAAKKHAKKHSHQQPAKPAAQPAA</sequence>
<keyword id="KW-0574">Periplasm</keyword>
<keyword id="KW-0732">Signal</keyword>
<gene>
    <name evidence="1" type="primary">asr</name>
    <name type="ordered locus">ECUMN_1882</name>
</gene>
<reference key="1">
    <citation type="journal article" date="2009" name="PLoS Genet.">
        <title>Organised genome dynamics in the Escherichia coli species results in highly diverse adaptive paths.</title>
        <authorList>
            <person name="Touchon M."/>
            <person name="Hoede C."/>
            <person name="Tenaillon O."/>
            <person name="Barbe V."/>
            <person name="Baeriswyl S."/>
            <person name="Bidet P."/>
            <person name="Bingen E."/>
            <person name="Bonacorsi S."/>
            <person name="Bouchier C."/>
            <person name="Bouvet O."/>
            <person name="Calteau A."/>
            <person name="Chiapello H."/>
            <person name="Clermont O."/>
            <person name="Cruveiller S."/>
            <person name="Danchin A."/>
            <person name="Diard M."/>
            <person name="Dossat C."/>
            <person name="Karoui M.E."/>
            <person name="Frapy E."/>
            <person name="Garry L."/>
            <person name="Ghigo J.M."/>
            <person name="Gilles A.M."/>
            <person name="Johnson J."/>
            <person name="Le Bouguenec C."/>
            <person name="Lescat M."/>
            <person name="Mangenot S."/>
            <person name="Martinez-Jehanne V."/>
            <person name="Matic I."/>
            <person name="Nassif X."/>
            <person name="Oztas S."/>
            <person name="Petit M.A."/>
            <person name="Pichon C."/>
            <person name="Rouy Z."/>
            <person name="Ruf C.S."/>
            <person name="Schneider D."/>
            <person name="Tourret J."/>
            <person name="Vacherie B."/>
            <person name="Vallenet D."/>
            <person name="Medigue C."/>
            <person name="Rocha E.P.C."/>
            <person name="Denamur E."/>
        </authorList>
    </citation>
    <scope>NUCLEOTIDE SEQUENCE [LARGE SCALE GENOMIC DNA]</scope>
    <source>
        <strain>UMN026 / ExPEC</strain>
    </source>
</reference>
<comment type="function">
    <text evidence="1">Required for growth and/or survival at acidic conditions.</text>
</comment>
<comment type="subcellular location">
    <subcellularLocation>
        <location evidence="1">Periplasm</location>
    </subcellularLocation>
</comment>
<comment type="PTM">
    <text evidence="1">Proteolytic processing gives rise to the active protein.</text>
</comment>
<comment type="similarity">
    <text evidence="1">Belongs to the Asr family.</text>
</comment>
<evidence type="ECO:0000255" key="1">
    <source>
        <dbReference type="HAMAP-Rule" id="MF_00546"/>
    </source>
</evidence>
<evidence type="ECO:0000256" key="2">
    <source>
        <dbReference type="SAM" id="MobiDB-lite"/>
    </source>
</evidence>
<accession>B7NB47</accession>
<proteinExistence type="inferred from homology"/>
<protein>
    <recommendedName>
        <fullName evidence="1">Acid shock protein</fullName>
    </recommendedName>
</protein>
<dbReference type="EMBL" id="CU928163">
    <property type="protein sequence ID" value="CAR13081.1"/>
    <property type="molecule type" value="Genomic_DNA"/>
</dbReference>
<dbReference type="RefSeq" id="WP_001513309.1">
    <property type="nucleotide sequence ID" value="NC_011751.1"/>
</dbReference>
<dbReference type="RefSeq" id="YP_002412615.1">
    <property type="nucleotide sequence ID" value="NC_011751.1"/>
</dbReference>
<dbReference type="STRING" id="585056.ECUMN_1882"/>
<dbReference type="KEGG" id="eum:ECUMN_1882"/>
<dbReference type="PATRIC" id="fig|585056.7.peg.2069"/>
<dbReference type="HOGENOM" id="CLU_102486_2_0_6"/>
<dbReference type="Proteomes" id="UP000007097">
    <property type="component" value="Chromosome"/>
</dbReference>
<dbReference type="GO" id="GO:0042597">
    <property type="term" value="C:periplasmic space"/>
    <property type="evidence" value="ECO:0007669"/>
    <property type="project" value="UniProtKB-SubCell"/>
</dbReference>
<dbReference type="HAMAP" id="MF_00546">
    <property type="entry name" value="Asr"/>
    <property type="match status" value="1"/>
</dbReference>
<dbReference type="InterPro" id="IPR023497">
    <property type="entry name" value="Acid_shock"/>
</dbReference>
<dbReference type="NCBIfam" id="NF033636">
    <property type="entry name" value="acid_shock_Asr"/>
    <property type="match status" value="1"/>
</dbReference>
<dbReference type="Pfam" id="PF06392">
    <property type="entry name" value="Asr"/>
    <property type="match status" value="1"/>
</dbReference>
<organism>
    <name type="scientific">Escherichia coli O17:K52:H18 (strain UMN026 / ExPEC)</name>
    <dbReference type="NCBI Taxonomy" id="585056"/>
    <lineage>
        <taxon>Bacteria</taxon>
        <taxon>Pseudomonadati</taxon>
        <taxon>Pseudomonadota</taxon>
        <taxon>Gammaproteobacteria</taxon>
        <taxon>Enterobacterales</taxon>
        <taxon>Enterobacteriaceae</taxon>
        <taxon>Escherichia</taxon>
    </lineage>
</organism>
<name>ASR_ECOLU</name>